<reference key="1">
    <citation type="submission" date="2007-03" db="EMBL/GenBank/DDBJ databases">
        <title>Annotation of Culex pipiens quinquefasciatus.</title>
        <authorList>
            <consortium name="The Broad Institute Genome Sequencing Platform"/>
            <person name="Atkinson P.W."/>
            <person name="Hemingway J."/>
            <person name="Christensen B.M."/>
            <person name="Higgs S."/>
            <person name="Kodira C.D."/>
            <person name="Hannick L.I."/>
            <person name="Megy K."/>
            <person name="O'Leary S.B."/>
            <person name="Pearson M."/>
            <person name="Haas B.J."/>
            <person name="Mauceli E."/>
            <person name="Wortman J.R."/>
            <person name="Lee N.H."/>
            <person name="Guigo R."/>
            <person name="Stanke M."/>
            <person name="Alvarado L."/>
            <person name="Amedeo P."/>
            <person name="Antoine C.H."/>
            <person name="Arensburger P."/>
            <person name="Bidwell S.L."/>
            <person name="Crawford M."/>
            <person name="Camaro F."/>
            <person name="Devon K."/>
            <person name="Engels R."/>
            <person name="Hammond M."/>
            <person name="Howarth C."/>
            <person name="Koehrsen M."/>
            <person name="Lawson D."/>
            <person name="Montgomery P."/>
            <person name="Nene V."/>
            <person name="Nusbaum C."/>
            <person name="Puiu D."/>
            <person name="Romero-Severson J."/>
            <person name="Severson D.W."/>
            <person name="Shumway M."/>
            <person name="Sisk P."/>
            <person name="Stolte C."/>
            <person name="Zeng Q."/>
            <person name="Eisenstadt E."/>
            <person name="Fraser-Liggett C.M."/>
            <person name="Strausberg R."/>
            <person name="Galagan J."/>
            <person name="Birren B."/>
            <person name="Collins F.H."/>
        </authorList>
    </citation>
    <scope>NUCLEOTIDE SEQUENCE [LARGE SCALE GENOMIC DNA]</scope>
    <source>
        <strain>JHB</strain>
    </source>
</reference>
<keyword id="KW-0067">ATP-binding</keyword>
<keyword id="KW-0963">Cytoplasm</keyword>
<keyword id="KW-0256">Endoplasmic reticulum</keyword>
<keyword id="KW-0378">Hydrolase</keyword>
<keyword id="KW-0479">Metal-binding</keyword>
<keyword id="KW-0547">Nucleotide-binding</keyword>
<keyword id="KW-1185">Reference proteome</keyword>
<keyword id="KW-0813">Transport</keyword>
<keyword id="KW-0862">Zinc</keyword>
<proteinExistence type="inferred from homology"/>
<protein>
    <recommendedName>
        <fullName evidence="1">ATPase ASNA1 homolog</fullName>
        <ecNumber evidence="1">3.6.-.-</ecNumber>
    </recommendedName>
    <alternativeName>
        <fullName evidence="1">Arsenical pump-driving ATPase homolog</fullName>
    </alternativeName>
    <alternativeName>
        <fullName evidence="1">Arsenite-stimulated ATPase</fullName>
    </alternativeName>
</protein>
<feature type="chain" id="PRO_0000388147" description="ATPase ASNA1 homolog">
    <location>
        <begin position="1"/>
        <end position="348"/>
    </location>
</feature>
<feature type="active site" evidence="1">
    <location>
        <position position="58"/>
    </location>
</feature>
<feature type="binding site" evidence="1">
    <location>
        <begin position="29"/>
        <end position="36"/>
    </location>
    <ligand>
        <name>ATP</name>
        <dbReference type="ChEBI" id="CHEBI:30616"/>
    </ligand>
</feature>
<feature type="binding site" evidence="1">
    <location>
        <position position="236"/>
    </location>
    <ligand>
        <name>ATP</name>
        <dbReference type="ChEBI" id="CHEBI:30616"/>
    </ligand>
</feature>
<feature type="binding site" evidence="1">
    <location>
        <position position="263"/>
    </location>
    <ligand>
        <name>ATP</name>
        <dbReference type="ChEBI" id="CHEBI:30616"/>
    </ligand>
</feature>
<feature type="binding site" evidence="1">
    <location>
        <position position="275"/>
    </location>
    <ligand>
        <name>Zn(2+)</name>
        <dbReference type="ChEBI" id="CHEBI:29105"/>
        <note>ligand shared between dimeric partners</note>
    </ligand>
</feature>
<feature type="binding site" evidence="1">
    <location>
        <position position="278"/>
    </location>
    <ligand>
        <name>Zn(2+)</name>
        <dbReference type="ChEBI" id="CHEBI:29105"/>
        <note>ligand shared between dimeric partners</note>
    </ligand>
</feature>
<comment type="function">
    <text evidence="1">ATPase required for the post-translational delivery of tail-anchored (TA) proteins to the endoplasmic reticulum. Recognizes and selectively binds the transmembrane domain of TA proteins in the cytosol. This complex then targets to the endoplasmic reticulum by membrane-bound receptors, where the tail-anchored protein is released for insertion. This process is regulated by ATP binding and hydrolysis. ATP binding drives the homodimer towards the closed dimer state, facilitating recognition of newly synthesized TA membrane proteins. ATP hydrolysis is required for insertion. Subsequently, the homodimer reverts towards the open dimer state, lowering its affinity for the membrane-bound receptor, and returning it to the cytosol to initiate a new round of targeting.</text>
</comment>
<comment type="subunit">
    <text evidence="1">Homodimer.</text>
</comment>
<comment type="subcellular location">
    <subcellularLocation>
        <location evidence="1">Cytoplasm</location>
    </subcellularLocation>
    <subcellularLocation>
        <location evidence="1">Endoplasmic reticulum</location>
    </subcellularLocation>
</comment>
<comment type="similarity">
    <text evidence="1">Belongs to the arsA ATPase family.</text>
</comment>
<sequence>MEADFEPLEPSLRNIIDQKSLKWIFVGGKGGVGKTTCSCSLAVQLAKDRESVLIISTDPAHNISDAFDQKFTKVPSKVNGFDNLFAMEIDPNVGLNELPDEYFEGENSAMKLSKGVFQEIIGALPGIDEAMSYAEVMKLVKAMNFSTVVFDTAPTGHTLRLLSFPQVVEKGLGKLLRLKMKLAPFISQMGSLFGMQDFNADTLTGKLEEMLTIIRQVNEQFRNPDQTTFVCVCIAEFLSLYETERLVQELTKCGIDTHNIIVNQLLFRREGQAPCAMCSARYKVQGKYLDQIADLYEDFHVVKLPLLDKEVRGAEKVKKFSVNLIEPYSPEKAAAEAVAEEEEEGTSK</sequence>
<dbReference type="EC" id="3.6.-.-" evidence="1"/>
<dbReference type="EMBL" id="DS231911">
    <property type="protein sequence ID" value="EDS45868.1"/>
    <property type="molecule type" value="Genomic_DNA"/>
</dbReference>
<dbReference type="SMR" id="B0WEV5"/>
<dbReference type="FunCoup" id="B0WEV5">
    <property type="interactions" value="2040"/>
</dbReference>
<dbReference type="STRING" id="7176.B0WEV5"/>
<dbReference type="EnsemblMetazoa" id="CPIJ005690-RA">
    <property type="protein sequence ID" value="CPIJ005690-PA"/>
    <property type="gene ID" value="CPIJ005690"/>
</dbReference>
<dbReference type="EnsemblMetazoa" id="CQUJHB014907.R23118">
    <property type="protein sequence ID" value="CQUJHB014907.P23118"/>
    <property type="gene ID" value="CQUJHB014907"/>
</dbReference>
<dbReference type="EnsemblMetazoa" id="XM_001847187.2">
    <property type="protein sequence ID" value="XP_001847239.1"/>
    <property type="gene ID" value="LOC6037313"/>
</dbReference>
<dbReference type="KEGG" id="cqu:CpipJ_CPIJ005690"/>
<dbReference type="VEuPathDB" id="VectorBase:CPIJ005690"/>
<dbReference type="VEuPathDB" id="VectorBase:CQUJHB014907"/>
<dbReference type="eggNOG" id="KOG2825">
    <property type="taxonomic scope" value="Eukaryota"/>
</dbReference>
<dbReference type="HOGENOM" id="CLU_040761_0_0_1"/>
<dbReference type="InParanoid" id="B0WEV5"/>
<dbReference type="OMA" id="MDAPYEF"/>
<dbReference type="OrthoDB" id="1770at2759"/>
<dbReference type="PhylomeDB" id="B0WEV5"/>
<dbReference type="Proteomes" id="UP000002320">
    <property type="component" value="Unassembled WGS sequence"/>
</dbReference>
<dbReference type="GO" id="GO:0043529">
    <property type="term" value="C:GET complex"/>
    <property type="evidence" value="ECO:0007669"/>
    <property type="project" value="TreeGrafter"/>
</dbReference>
<dbReference type="GO" id="GO:0005524">
    <property type="term" value="F:ATP binding"/>
    <property type="evidence" value="ECO:0007669"/>
    <property type="project" value="UniProtKB-UniRule"/>
</dbReference>
<dbReference type="GO" id="GO:0016887">
    <property type="term" value="F:ATP hydrolysis activity"/>
    <property type="evidence" value="ECO:0007669"/>
    <property type="project" value="InterPro"/>
</dbReference>
<dbReference type="GO" id="GO:0046872">
    <property type="term" value="F:metal ion binding"/>
    <property type="evidence" value="ECO:0007669"/>
    <property type="project" value="UniProtKB-KW"/>
</dbReference>
<dbReference type="GO" id="GO:0071816">
    <property type="term" value="P:tail-anchored membrane protein insertion into ER membrane"/>
    <property type="evidence" value="ECO:0007669"/>
    <property type="project" value="TreeGrafter"/>
</dbReference>
<dbReference type="CDD" id="cd02035">
    <property type="entry name" value="ArsA"/>
    <property type="match status" value="1"/>
</dbReference>
<dbReference type="FunFam" id="3.40.50.300:FF:000235">
    <property type="entry name" value="ATPase ASNA1"/>
    <property type="match status" value="1"/>
</dbReference>
<dbReference type="Gene3D" id="3.40.50.300">
    <property type="entry name" value="P-loop containing nucleotide triphosphate hydrolases"/>
    <property type="match status" value="1"/>
</dbReference>
<dbReference type="HAMAP" id="MF_03112">
    <property type="entry name" value="Asna1_Get3"/>
    <property type="match status" value="1"/>
</dbReference>
<dbReference type="InterPro" id="IPR025723">
    <property type="entry name" value="Anion-transp_ATPase-like_dom"/>
</dbReference>
<dbReference type="InterPro" id="IPR016300">
    <property type="entry name" value="ATPase_ArsA/GET3"/>
</dbReference>
<dbReference type="InterPro" id="IPR027542">
    <property type="entry name" value="ATPase_ArsA/GET3_euk"/>
</dbReference>
<dbReference type="InterPro" id="IPR027417">
    <property type="entry name" value="P-loop_NTPase"/>
</dbReference>
<dbReference type="NCBIfam" id="TIGR00345">
    <property type="entry name" value="GET3_arsA_TRC40"/>
    <property type="match status" value="1"/>
</dbReference>
<dbReference type="PANTHER" id="PTHR10803">
    <property type="entry name" value="ARSENICAL PUMP-DRIVING ATPASE ARSENITE-TRANSLOCATING ATPASE"/>
    <property type="match status" value="1"/>
</dbReference>
<dbReference type="PANTHER" id="PTHR10803:SF3">
    <property type="entry name" value="ATPASE GET3"/>
    <property type="match status" value="1"/>
</dbReference>
<dbReference type="Pfam" id="PF02374">
    <property type="entry name" value="ArsA_ATPase"/>
    <property type="match status" value="1"/>
</dbReference>
<dbReference type="SUPFAM" id="SSF52540">
    <property type="entry name" value="P-loop containing nucleoside triphosphate hydrolases"/>
    <property type="match status" value="1"/>
</dbReference>
<evidence type="ECO:0000255" key="1">
    <source>
        <dbReference type="HAMAP-Rule" id="MF_03112"/>
    </source>
</evidence>
<accession>B0WEV5</accession>
<organism>
    <name type="scientific">Culex quinquefasciatus</name>
    <name type="common">Southern house mosquito</name>
    <name type="synonym">Culex pungens</name>
    <dbReference type="NCBI Taxonomy" id="7176"/>
    <lineage>
        <taxon>Eukaryota</taxon>
        <taxon>Metazoa</taxon>
        <taxon>Ecdysozoa</taxon>
        <taxon>Arthropoda</taxon>
        <taxon>Hexapoda</taxon>
        <taxon>Insecta</taxon>
        <taxon>Pterygota</taxon>
        <taxon>Neoptera</taxon>
        <taxon>Endopterygota</taxon>
        <taxon>Diptera</taxon>
        <taxon>Nematocera</taxon>
        <taxon>Culicoidea</taxon>
        <taxon>Culicidae</taxon>
        <taxon>Culicinae</taxon>
        <taxon>Culicini</taxon>
        <taxon>Culex</taxon>
        <taxon>Culex</taxon>
    </lineage>
</organism>
<gene>
    <name type="ORF">CPIJ005690</name>
</gene>
<name>ASNA_CULQU</name>